<sequence>MTSEVIEDEKQFYSKAKTYWKQIPPTVDGMLGGYGHISNIDLNSSRKFLQRFLREGPNKTGTSCALDCGAGIGRITKRLLLPLFRVVDMVDVTEDFLAKAKTYLGEEGKRVRNYFCCGLQDFSPEPGSYDVIWIQWVIGHLTDQHLAEFLRRCKRGLRPNGIIVIKDNMAQEGVILDDVDSSVCRDLEVVRRIIRTAGLSLLAEERQENLPDEIYHVYSFALR</sequence>
<evidence type="ECO:0000250" key="1">
    <source>
        <dbReference type="UniProtKB" id="Q9BV86"/>
    </source>
</evidence>
<evidence type="ECO:0000269" key="2">
    <source>
    </source>
</evidence>
<evidence type="ECO:0000305" key="3"/>
<keyword id="KW-0007">Acetylation</keyword>
<keyword id="KW-0489">Methyltransferase</keyword>
<keyword id="KW-0539">Nucleus</keyword>
<keyword id="KW-1185">Reference proteome</keyword>
<keyword id="KW-0949">S-adenosyl-L-methionine</keyword>
<keyword id="KW-0808">Transferase</keyword>
<protein>
    <recommendedName>
        <fullName>N-terminal Xaa-Pro-Lys N-methyltransferase 1</fullName>
        <ecNumber evidence="2">2.1.1.244</ecNumber>
    </recommendedName>
    <alternativeName>
        <fullName>Alpha N-terminal protein methyltransferase 1A</fullName>
    </alternativeName>
    <alternativeName>
        <fullName>Methyltransferase-like protein 11A</fullName>
    </alternativeName>
    <alternativeName>
        <fullName>X-Pro-Lys N-terminal protein methyltransferase 1A</fullName>
        <shortName>NTM1A</shortName>
    </alternativeName>
    <component>
        <recommendedName>
            <fullName>N-terminal Xaa-Pro-Lys N-methyltransferase 1, N-terminally processed</fullName>
        </recommendedName>
    </component>
</protein>
<organism>
    <name type="scientific">Mus musculus</name>
    <name type="common">Mouse</name>
    <dbReference type="NCBI Taxonomy" id="10090"/>
    <lineage>
        <taxon>Eukaryota</taxon>
        <taxon>Metazoa</taxon>
        <taxon>Chordata</taxon>
        <taxon>Craniata</taxon>
        <taxon>Vertebrata</taxon>
        <taxon>Euteleostomi</taxon>
        <taxon>Mammalia</taxon>
        <taxon>Eutheria</taxon>
        <taxon>Euarchontoglires</taxon>
        <taxon>Glires</taxon>
        <taxon>Rodentia</taxon>
        <taxon>Myomorpha</taxon>
        <taxon>Muroidea</taxon>
        <taxon>Muridae</taxon>
        <taxon>Murinae</taxon>
        <taxon>Mus</taxon>
        <taxon>Mus</taxon>
    </lineage>
</organism>
<accession>Q8R2U4</accession>
<accession>A2APZ4</accession>
<feature type="chain" id="PRO_0000423229" description="N-terminal Xaa-Pro-Lys N-methyltransferase 1">
    <location>
        <begin position="1"/>
        <end position="223"/>
    </location>
</feature>
<feature type="initiator methionine" description="Removed; alternate" evidence="1">
    <location>
        <position position="1"/>
    </location>
</feature>
<feature type="chain" id="PRO_0000119289" description="N-terminal Xaa-Pro-Lys N-methyltransferase 1, N-terminally processed">
    <location>
        <begin position="2"/>
        <end position="223"/>
    </location>
</feature>
<feature type="binding site" evidence="1">
    <location>
        <position position="69"/>
    </location>
    <ligand>
        <name>S-adenosyl-L-methionine</name>
        <dbReference type="ChEBI" id="CHEBI:59789"/>
    </ligand>
</feature>
<feature type="binding site" evidence="1">
    <location>
        <position position="74"/>
    </location>
    <ligand>
        <name>S-adenosyl-L-methionine</name>
        <dbReference type="ChEBI" id="CHEBI:59789"/>
    </ligand>
</feature>
<feature type="binding site" evidence="1">
    <location>
        <begin position="91"/>
        <end position="93"/>
    </location>
    <ligand>
        <name>S-adenosyl-L-methionine</name>
        <dbReference type="ChEBI" id="CHEBI:59789"/>
    </ligand>
</feature>
<feature type="binding site" evidence="1">
    <location>
        <begin position="119"/>
        <end position="120"/>
    </location>
    <ligand>
        <name>S-adenosyl-L-methionine</name>
        <dbReference type="ChEBI" id="CHEBI:59789"/>
    </ligand>
</feature>
<feature type="binding site" evidence="1">
    <location>
        <position position="135"/>
    </location>
    <ligand>
        <name>S-adenosyl-L-methionine</name>
        <dbReference type="ChEBI" id="CHEBI:59789"/>
    </ligand>
</feature>
<feature type="modified residue" description="N-acetylmethionine" evidence="1">
    <location>
        <position position="1"/>
    </location>
</feature>
<feature type="modified residue" description="N-acetylthreonine; in N-terminal Xaa-Pro-Lys N-methyltransferase 1, N-terminally processed" evidence="1">
    <location>
        <position position="2"/>
    </location>
</feature>
<reference key="1">
    <citation type="journal article" date="2005" name="Science">
        <title>The transcriptional landscape of the mammalian genome.</title>
        <authorList>
            <person name="Carninci P."/>
            <person name="Kasukawa T."/>
            <person name="Katayama S."/>
            <person name="Gough J."/>
            <person name="Frith M.C."/>
            <person name="Maeda N."/>
            <person name="Oyama R."/>
            <person name="Ravasi T."/>
            <person name="Lenhard B."/>
            <person name="Wells C."/>
            <person name="Kodzius R."/>
            <person name="Shimokawa K."/>
            <person name="Bajic V.B."/>
            <person name="Brenner S.E."/>
            <person name="Batalov S."/>
            <person name="Forrest A.R."/>
            <person name="Zavolan M."/>
            <person name="Davis M.J."/>
            <person name="Wilming L.G."/>
            <person name="Aidinis V."/>
            <person name="Allen J.E."/>
            <person name="Ambesi-Impiombato A."/>
            <person name="Apweiler R."/>
            <person name="Aturaliya R.N."/>
            <person name="Bailey T.L."/>
            <person name="Bansal M."/>
            <person name="Baxter L."/>
            <person name="Beisel K.W."/>
            <person name="Bersano T."/>
            <person name="Bono H."/>
            <person name="Chalk A.M."/>
            <person name="Chiu K.P."/>
            <person name="Choudhary V."/>
            <person name="Christoffels A."/>
            <person name="Clutterbuck D.R."/>
            <person name="Crowe M.L."/>
            <person name="Dalla E."/>
            <person name="Dalrymple B.P."/>
            <person name="de Bono B."/>
            <person name="Della Gatta G."/>
            <person name="di Bernardo D."/>
            <person name="Down T."/>
            <person name="Engstrom P."/>
            <person name="Fagiolini M."/>
            <person name="Faulkner G."/>
            <person name="Fletcher C.F."/>
            <person name="Fukushima T."/>
            <person name="Furuno M."/>
            <person name="Futaki S."/>
            <person name="Gariboldi M."/>
            <person name="Georgii-Hemming P."/>
            <person name="Gingeras T.R."/>
            <person name="Gojobori T."/>
            <person name="Green R.E."/>
            <person name="Gustincich S."/>
            <person name="Harbers M."/>
            <person name="Hayashi Y."/>
            <person name="Hensch T.K."/>
            <person name="Hirokawa N."/>
            <person name="Hill D."/>
            <person name="Huminiecki L."/>
            <person name="Iacono M."/>
            <person name="Ikeo K."/>
            <person name="Iwama A."/>
            <person name="Ishikawa T."/>
            <person name="Jakt M."/>
            <person name="Kanapin A."/>
            <person name="Katoh M."/>
            <person name="Kawasawa Y."/>
            <person name="Kelso J."/>
            <person name="Kitamura H."/>
            <person name="Kitano H."/>
            <person name="Kollias G."/>
            <person name="Krishnan S.P."/>
            <person name="Kruger A."/>
            <person name="Kummerfeld S.K."/>
            <person name="Kurochkin I.V."/>
            <person name="Lareau L.F."/>
            <person name="Lazarevic D."/>
            <person name="Lipovich L."/>
            <person name="Liu J."/>
            <person name="Liuni S."/>
            <person name="McWilliam S."/>
            <person name="Madan Babu M."/>
            <person name="Madera M."/>
            <person name="Marchionni L."/>
            <person name="Matsuda H."/>
            <person name="Matsuzawa S."/>
            <person name="Miki H."/>
            <person name="Mignone F."/>
            <person name="Miyake S."/>
            <person name="Morris K."/>
            <person name="Mottagui-Tabar S."/>
            <person name="Mulder N."/>
            <person name="Nakano N."/>
            <person name="Nakauchi H."/>
            <person name="Ng P."/>
            <person name="Nilsson R."/>
            <person name="Nishiguchi S."/>
            <person name="Nishikawa S."/>
            <person name="Nori F."/>
            <person name="Ohara O."/>
            <person name="Okazaki Y."/>
            <person name="Orlando V."/>
            <person name="Pang K.C."/>
            <person name="Pavan W.J."/>
            <person name="Pavesi G."/>
            <person name="Pesole G."/>
            <person name="Petrovsky N."/>
            <person name="Piazza S."/>
            <person name="Reed J."/>
            <person name="Reid J.F."/>
            <person name="Ring B.Z."/>
            <person name="Ringwald M."/>
            <person name="Rost B."/>
            <person name="Ruan Y."/>
            <person name="Salzberg S.L."/>
            <person name="Sandelin A."/>
            <person name="Schneider C."/>
            <person name="Schoenbach C."/>
            <person name="Sekiguchi K."/>
            <person name="Semple C.A."/>
            <person name="Seno S."/>
            <person name="Sessa L."/>
            <person name="Sheng Y."/>
            <person name="Shibata Y."/>
            <person name="Shimada H."/>
            <person name="Shimada K."/>
            <person name="Silva D."/>
            <person name="Sinclair B."/>
            <person name="Sperling S."/>
            <person name="Stupka E."/>
            <person name="Sugiura K."/>
            <person name="Sultana R."/>
            <person name="Takenaka Y."/>
            <person name="Taki K."/>
            <person name="Tammoja K."/>
            <person name="Tan S.L."/>
            <person name="Tang S."/>
            <person name="Taylor M.S."/>
            <person name="Tegner J."/>
            <person name="Teichmann S.A."/>
            <person name="Ueda H.R."/>
            <person name="van Nimwegen E."/>
            <person name="Verardo R."/>
            <person name="Wei C.L."/>
            <person name="Yagi K."/>
            <person name="Yamanishi H."/>
            <person name="Zabarovsky E."/>
            <person name="Zhu S."/>
            <person name="Zimmer A."/>
            <person name="Hide W."/>
            <person name="Bult C."/>
            <person name="Grimmond S.M."/>
            <person name="Teasdale R.D."/>
            <person name="Liu E.T."/>
            <person name="Brusic V."/>
            <person name="Quackenbush J."/>
            <person name="Wahlestedt C."/>
            <person name="Mattick J.S."/>
            <person name="Hume D.A."/>
            <person name="Kai C."/>
            <person name="Sasaki D."/>
            <person name="Tomaru Y."/>
            <person name="Fukuda S."/>
            <person name="Kanamori-Katayama M."/>
            <person name="Suzuki M."/>
            <person name="Aoki J."/>
            <person name="Arakawa T."/>
            <person name="Iida J."/>
            <person name="Imamura K."/>
            <person name="Itoh M."/>
            <person name="Kato T."/>
            <person name="Kawaji H."/>
            <person name="Kawagashira N."/>
            <person name="Kawashima T."/>
            <person name="Kojima M."/>
            <person name="Kondo S."/>
            <person name="Konno H."/>
            <person name="Nakano K."/>
            <person name="Ninomiya N."/>
            <person name="Nishio T."/>
            <person name="Okada M."/>
            <person name="Plessy C."/>
            <person name="Shibata K."/>
            <person name="Shiraki T."/>
            <person name="Suzuki S."/>
            <person name="Tagami M."/>
            <person name="Waki K."/>
            <person name="Watahiki A."/>
            <person name="Okamura-Oho Y."/>
            <person name="Suzuki H."/>
            <person name="Kawai J."/>
            <person name="Hayashizaki Y."/>
        </authorList>
    </citation>
    <scope>NUCLEOTIDE SEQUENCE [LARGE SCALE MRNA]</scope>
    <source>
        <strain>NOD</strain>
        <tissue>Dendritic cell</tissue>
    </source>
</reference>
<reference key="2">
    <citation type="journal article" date="2009" name="PLoS Biol.">
        <title>Lineage-specific biology revealed by a finished genome assembly of the mouse.</title>
        <authorList>
            <person name="Church D.M."/>
            <person name="Goodstadt L."/>
            <person name="Hillier L.W."/>
            <person name="Zody M.C."/>
            <person name="Goldstein S."/>
            <person name="She X."/>
            <person name="Bult C.J."/>
            <person name="Agarwala R."/>
            <person name="Cherry J.L."/>
            <person name="DiCuccio M."/>
            <person name="Hlavina W."/>
            <person name="Kapustin Y."/>
            <person name="Meric P."/>
            <person name="Maglott D."/>
            <person name="Birtle Z."/>
            <person name="Marques A.C."/>
            <person name="Graves T."/>
            <person name="Zhou S."/>
            <person name="Teague B."/>
            <person name="Potamousis K."/>
            <person name="Churas C."/>
            <person name="Place M."/>
            <person name="Herschleb J."/>
            <person name="Runnheim R."/>
            <person name="Forrest D."/>
            <person name="Amos-Landgraf J."/>
            <person name="Schwartz D.C."/>
            <person name="Cheng Z."/>
            <person name="Lindblad-Toh K."/>
            <person name="Eichler E.E."/>
            <person name="Ponting C.P."/>
        </authorList>
    </citation>
    <scope>NUCLEOTIDE SEQUENCE [LARGE SCALE GENOMIC DNA]</scope>
    <source>
        <strain>C57BL/6J</strain>
    </source>
</reference>
<reference key="3">
    <citation type="submission" date="2005-07" db="EMBL/GenBank/DDBJ databases">
        <authorList>
            <person name="Mural R.J."/>
            <person name="Adams M.D."/>
            <person name="Myers E.W."/>
            <person name="Smith H.O."/>
            <person name="Venter J.C."/>
        </authorList>
    </citation>
    <scope>NUCLEOTIDE SEQUENCE [LARGE SCALE GENOMIC DNA]</scope>
</reference>
<reference key="4">
    <citation type="journal article" date="2004" name="Genome Res.">
        <title>The status, quality, and expansion of the NIH full-length cDNA project: the Mammalian Gene Collection (MGC).</title>
        <authorList>
            <consortium name="The MGC Project Team"/>
        </authorList>
    </citation>
    <scope>NUCLEOTIDE SEQUENCE [LARGE SCALE MRNA]</scope>
    <source>
        <strain>Czech II</strain>
        <tissue>Mammary tumor</tissue>
    </source>
</reference>
<reference key="5">
    <citation type="journal article" date="2010" name="Cell">
        <title>A tissue-specific atlas of mouse protein phosphorylation and expression.</title>
        <authorList>
            <person name="Huttlin E.L."/>
            <person name="Jedrychowski M.P."/>
            <person name="Elias J.E."/>
            <person name="Goswami T."/>
            <person name="Rad R."/>
            <person name="Beausoleil S.A."/>
            <person name="Villen J."/>
            <person name="Haas W."/>
            <person name="Sowa M.E."/>
            <person name="Gygi S.P."/>
        </authorList>
    </citation>
    <scope>IDENTIFICATION BY MASS SPECTROMETRY [LARGE SCALE ANALYSIS]</scope>
    <source>
        <tissue>Brain</tissue>
        <tissue>Heart</tissue>
        <tissue>Liver</tissue>
        <tissue>Spleen</tissue>
        <tissue>Testis</tissue>
    </source>
</reference>
<reference key="6">
    <citation type="journal article" date="2010" name="Nature">
        <title>NRMT is an alpha-N-methyltransferase that methylates RCC1 and retinoblastoma protein.</title>
        <authorList>
            <person name="Tooley C.E."/>
            <person name="Petkowski J.J."/>
            <person name="Muratore-Schroeder T.L."/>
            <person name="Balsbaugh J.L."/>
            <person name="Shabanowitz J."/>
            <person name="Sabat M."/>
            <person name="Minor W."/>
            <person name="Hunt D.F."/>
            <person name="Macara I.G."/>
        </authorList>
    </citation>
    <scope>FUNCTION</scope>
    <scope>CATALYTIC ACTIVITY</scope>
</reference>
<comment type="function">
    <text evidence="1 2">Distributive alpha-N-methyltransferase that methylates the N-terminus of target proteins containing the N-terminal motif [Ala/Gly/Pro/Ser]-Pro-Lys when the initiator Met is cleaved. Specifically catalyzes mono-, di- or tri-methylation of the exposed alpha-amino group of the Ala, Gly or Ser residue in the [Ala/Gly/Ser]-Pro-Lys motif and mono- or di-methylation of Pro in the Pro-Pro-Lys motif (PubMed:20668449). Some of the substrates may be primed by NTMT2-mediated monomethylation. Catalyzes the trimethylation of the N-terminal Gly in CENPA (after removal of Met-1) (By similarity). Responsible for the N-terminal methylation of KLHL31, MYL2, MYL3, RB1, RCC1, RPL23A and SET. Required during mitosis for normal bipolar spindle formation and chromosome segregation via its action on RCC1 (PubMed:20668449).</text>
</comment>
<comment type="catalytic activity">
    <reaction evidence="2">
        <text>N-terminal L-alanyl-L-prolyl-L-lysyl-[protein] + 3 S-adenosyl-L-methionine = N-terminal N,N,N-trimethyl-L-alanyl-L-prolyl-L-lysyl-[protein] + 3 S-adenosyl-L-homocysteine + 3 H(+)</text>
        <dbReference type="Rhea" id="RHEA:54712"/>
        <dbReference type="Rhea" id="RHEA-COMP:13785"/>
        <dbReference type="Rhea" id="RHEA-COMP:13971"/>
        <dbReference type="ChEBI" id="CHEBI:15378"/>
        <dbReference type="ChEBI" id="CHEBI:57856"/>
        <dbReference type="ChEBI" id="CHEBI:59789"/>
        <dbReference type="ChEBI" id="CHEBI:138057"/>
        <dbReference type="ChEBI" id="CHEBI:138315"/>
        <dbReference type="EC" id="2.1.1.244"/>
    </reaction>
</comment>
<comment type="catalytic activity">
    <reaction evidence="2">
        <text>N-terminal L-seryl-L-prolyl-L-lysyl-[protein] + 3 S-adenosyl-L-methionine = N-terminal N,N,N-trimethyl-L-seryl-L-prolyl-L-lysyl-[protein] + 3 S-adenosyl-L-homocysteine + 3 H(+)</text>
        <dbReference type="Rhea" id="RHEA:54724"/>
        <dbReference type="Rhea" id="RHEA-COMP:13789"/>
        <dbReference type="Rhea" id="RHEA-COMP:13973"/>
        <dbReference type="ChEBI" id="CHEBI:15378"/>
        <dbReference type="ChEBI" id="CHEBI:57856"/>
        <dbReference type="ChEBI" id="CHEBI:59789"/>
        <dbReference type="ChEBI" id="CHEBI:138061"/>
        <dbReference type="ChEBI" id="CHEBI:138317"/>
        <dbReference type="EC" id="2.1.1.244"/>
    </reaction>
</comment>
<comment type="catalytic activity">
    <reaction evidence="2">
        <text>N-terminal L-prolyl-L-prolyl-L-lysyl-[protein] + 2 S-adenosyl-L-methionine = N-terminal N,N-dimethyl-L-prolyl-L-prolyl-L-lysyl-[protein] + 2 S-adenosyl-L-homocysteine + 2 H(+)</text>
        <dbReference type="Rhea" id="RHEA:54736"/>
        <dbReference type="Rhea" id="RHEA-COMP:13787"/>
        <dbReference type="Rhea" id="RHEA-COMP:13974"/>
        <dbReference type="ChEBI" id="CHEBI:15378"/>
        <dbReference type="ChEBI" id="CHEBI:57856"/>
        <dbReference type="ChEBI" id="CHEBI:59789"/>
        <dbReference type="ChEBI" id="CHEBI:138059"/>
        <dbReference type="ChEBI" id="CHEBI:138318"/>
        <dbReference type="EC" id="2.1.1.244"/>
    </reaction>
</comment>
<comment type="subcellular location">
    <subcellularLocation>
        <location evidence="1">Nucleus</location>
    </subcellularLocation>
    <text evidence="1">Predominantly nuclear.</text>
</comment>
<comment type="similarity">
    <text evidence="3">Belongs to the methyltransferase superfamily. NTM1 family.</text>
</comment>
<name>NTM1A_MOUSE</name>
<proteinExistence type="evidence at protein level"/>
<dbReference type="EC" id="2.1.1.244" evidence="2"/>
<dbReference type="EMBL" id="AK154783">
    <property type="protein sequence ID" value="BAE32826.1"/>
    <property type="molecule type" value="mRNA"/>
</dbReference>
<dbReference type="EMBL" id="AL844532">
    <property type="status" value="NOT_ANNOTATED_CDS"/>
    <property type="molecule type" value="Genomic_DNA"/>
</dbReference>
<dbReference type="EMBL" id="CH466542">
    <property type="protein sequence ID" value="EDL08489.1"/>
    <property type="molecule type" value="Genomic_DNA"/>
</dbReference>
<dbReference type="EMBL" id="CH466542">
    <property type="protein sequence ID" value="EDL08490.1"/>
    <property type="molecule type" value="Genomic_DNA"/>
</dbReference>
<dbReference type="EMBL" id="BC027220">
    <property type="protein sequence ID" value="AAH27220.1"/>
    <property type="molecule type" value="mRNA"/>
</dbReference>
<dbReference type="CCDS" id="CCDS15886.1"/>
<dbReference type="RefSeq" id="NP_001343362.1">
    <property type="nucleotide sequence ID" value="NM_001356433.1"/>
</dbReference>
<dbReference type="RefSeq" id="NP_733480.1">
    <property type="nucleotide sequence ID" value="NM_170592.3"/>
</dbReference>
<dbReference type="RefSeq" id="XP_006498289.1">
    <property type="nucleotide sequence ID" value="XM_006498226.3"/>
</dbReference>
<dbReference type="RefSeq" id="XP_030107813.1">
    <property type="nucleotide sequence ID" value="XM_030251953.2"/>
</dbReference>
<dbReference type="RefSeq" id="XP_036018355.1">
    <property type="nucleotide sequence ID" value="XM_036162462.1"/>
</dbReference>
<dbReference type="SMR" id="Q8R2U4"/>
<dbReference type="BioGRID" id="211599">
    <property type="interactions" value="2"/>
</dbReference>
<dbReference type="FunCoup" id="Q8R2U4">
    <property type="interactions" value="3331"/>
</dbReference>
<dbReference type="STRING" id="10090.ENSMUSP00000035303"/>
<dbReference type="GlyGen" id="Q8R2U4">
    <property type="glycosylation" value="1 site, 1 N-linked glycan (1 site)"/>
</dbReference>
<dbReference type="PhosphoSitePlus" id="Q8R2U4"/>
<dbReference type="SwissPalm" id="Q8R2U4"/>
<dbReference type="PaxDb" id="10090-ENSMUSP00000035303"/>
<dbReference type="PeptideAtlas" id="Q8R2U4"/>
<dbReference type="ProteomicsDB" id="291917"/>
<dbReference type="Pumba" id="Q8R2U4"/>
<dbReference type="Antibodypedia" id="17874">
    <property type="antibodies" value="159 antibodies from 28 providers"/>
</dbReference>
<dbReference type="DNASU" id="66617"/>
<dbReference type="Ensembl" id="ENSMUST00000041830.10">
    <property type="protein sequence ID" value="ENSMUSP00000035303.4"/>
    <property type="gene ID" value="ENSMUSG00000026857.10"/>
</dbReference>
<dbReference type="GeneID" id="66617"/>
<dbReference type="KEGG" id="mmu:66617"/>
<dbReference type="UCSC" id="uc008jcv.1">
    <property type="organism name" value="mouse"/>
</dbReference>
<dbReference type="AGR" id="MGI:1913867"/>
<dbReference type="CTD" id="28989"/>
<dbReference type="MGI" id="MGI:1913867">
    <property type="gene designation" value="Ntmt1"/>
</dbReference>
<dbReference type="VEuPathDB" id="HostDB:ENSMUSG00000026857"/>
<dbReference type="eggNOG" id="KOG3178">
    <property type="taxonomic scope" value="Eukaryota"/>
</dbReference>
<dbReference type="GeneTree" id="ENSGT00390000008371"/>
<dbReference type="HOGENOM" id="CLU_055356_3_1_1"/>
<dbReference type="InParanoid" id="Q8R2U4"/>
<dbReference type="OMA" id="PVRMYCL"/>
<dbReference type="OrthoDB" id="1298661at2759"/>
<dbReference type="PhylomeDB" id="Q8R2U4"/>
<dbReference type="TreeFam" id="TF314174"/>
<dbReference type="BioGRID-ORCS" id="66617">
    <property type="hits" value="0 hits in 78 CRISPR screens"/>
</dbReference>
<dbReference type="PRO" id="PR:Q8R2U4"/>
<dbReference type="Proteomes" id="UP000000589">
    <property type="component" value="Chromosome 2"/>
</dbReference>
<dbReference type="RNAct" id="Q8R2U4">
    <property type="molecule type" value="protein"/>
</dbReference>
<dbReference type="Bgee" id="ENSMUSG00000026857">
    <property type="expression patterns" value="Expressed in saccule of membranous labyrinth and 241 other cell types or tissues"/>
</dbReference>
<dbReference type="ExpressionAtlas" id="Q8R2U4">
    <property type="expression patterns" value="baseline and differential"/>
</dbReference>
<dbReference type="GO" id="GO:0005829">
    <property type="term" value="C:cytosol"/>
    <property type="evidence" value="ECO:0007669"/>
    <property type="project" value="Ensembl"/>
</dbReference>
<dbReference type="GO" id="GO:0005654">
    <property type="term" value="C:nucleoplasm"/>
    <property type="evidence" value="ECO:0007669"/>
    <property type="project" value="Ensembl"/>
</dbReference>
<dbReference type="GO" id="GO:0005634">
    <property type="term" value="C:nucleus"/>
    <property type="evidence" value="ECO:0000250"/>
    <property type="project" value="UniProtKB"/>
</dbReference>
<dbReference type="GO" id="GO:0042054">
    <property type="term" value="F:histone methyltransferase activity"/>
    <property type="evidence" value="ECO:0000250"/>
    <property type="project" value="UniProtKB"/>
</dbReference>
<dbReference type="GO" id="GO:0071885">
    <property type="term" value="F:N-terminal protein N-methyltransferase activity"/>
    <property type="evidence" value="ECO:0000250"/>
    <property type="project" value="UniProtKB"/>
</dbReference>
<dbReference type="GO" id="GO:0008276">
    <property type="term" value="F:protein methyltransferase activity"/>
    <property type="evidence" value="ECO:0000314"/>
    <property type="project" value="UniProtKB"/>
</dbReference>
<dbReference type="GO" id="GO:0007059">
    <property type="term" value="P:chromosome segregation"/>
    <property type="evidence" value="ECO:0000250"/>
    <property type="project" value="UniProtKB"/>
</dbReference>
<dbReference type="GO" id="GO:0018012">
    <property type="term" value="P:N-terminal peptidyl-alanine trimethylation"/>
    <property type="evidence" value="ECO:0000314"/>
    <property type="project" value="UniProtKB"/>
</dbReference>
<dbReference type="GO" id="GO:0018013">
    <property type="term" value="P:N-terminal peptidyl-glycine methylation"/>
    <property type="evidence" value="ECO:0000250"/>
    <property type="project" value="UniProtKB"/>
</dbReference>
<dbReference type="GO" id="GO:0018016">
    <property type="term" value="P:N-terminal peptidyl-proline dimethylation"/>
    <property type="evidence" value="ECO:0000314"/>
    <property type="project" value="UniProtKB"/>
</dbReference>
<dbReference type="GO" id="GO:0035572">
    <property type="term" value="P:N-terminal peptidyl-serine dimethylation"/>
    <property type="evidence" value="ECO:0000250"/>
    <property type="project" value="UniProtKB"/>
</dbReference>
<dbReference type="GO" id="GO:0035573">
    <property type="term" value="P:N-terminal peptidyl-serine trimethylation"/>
    <property type="evidence" value="ECO:0000250"/>
    <property type="project" value="UniProtKB"/>
</dbReference>
<dbReference type="GO" id="GO:0007051">
    <property type="term" value="P:spindle organization"/>
    <property type="evidence" value="ECO:0000250"/>
    <property type="project" value="UniProtKB"/>
</dbReference>
<dbReference type="CDD" id="cd02440">
    <property type="entry name" value="AdoMet_MTases"/>
    <property type="match status" value="1"/>
</dbReference>
<dbReference type="FunFam" id="3.40.50.150:FF:000025">
    <property type="entry name" value="N-terminal Xaa-Pro-Lys N-methyltransferase 1"/>
    <property type="match status" value="1"/>
</dbReference>
<dbReference type="Gene3D" id="3.40.50.150">
    <property type="entry name" value="Vaccinia Virus protein VP39"/>
    <property type="match status" value="1"/>
</dbReference>
<dbReference type="InterPro" id="IPR008576">
    <property type="entry name" value="MeTrfase_NTM1"/>
</dbReference>
<dbReference type="InterPro" id="IPR029063">
    <property type="entry name" value="SAM-dependent_MTases_sf"/>
</dbReference>
<dbReference type="PANTHER" id="PTHR12753">
    <property type="entry name" value="AD-003 - RELATED"/>
    <property type="match status" value="1"/>
</dbReference>
<dbReference type="PANTHER" id="PTHR12753:SF1">
    <property type="entry name" value="N-TERMINAL XAA-PRO-LYS N-METHYLTRANSFERASE 1"/>
    <property type="match status" value="1"/>
</dbReference>
<dbReference type="Pfam" id="PF05891">
    <property type="entry name" value="Methyltransf_PK"/>
    <property type="match status" value="1"/>
</dbReference>
<dbReference type="PIRSF" id="PIRSF016958">
    <property type="entry name" value="DUF858_MeTrfase_lik"/>
    <property type="match status" value="1"/>
</dbReference>
<dbReference type="SUPFAM" id="SSF53335">
    <property type="entry name" value="S-adenosyl-L-methionine-dependent methyltransferases"/>
    <property type="match status" value="1"/>
</dbReference>
<gene>
    <name type="primary">Ntmt1</name>
    <name type="synonym">Mettl11a</name>
</gene>